<accession>Q2TFN9</accession>
<organism>
    <name type="scientific">Canis lupus familiaris</name>
    <name type="common">Dog</name>
    <name type="synonym">Canis familiaris</name>
    <dbReference type="NCBI Taxonomy" id="9615"/>
    <lineage>
        <taxon>Eukaryota</taxon>
        <taxon>Metazoa</taxon>
        <taxon>Chordata</taxon>
        <taxon>Craniata</taxon>
        <taxon>Vertebrata</taxon>
        <taxon>Euteleostomi</taxon>
        <taxon>Mammalia</taxon>
        <taxon>Eutheria</taxon>
        <taxon>Laurasiatheria</taxon>
        <taxon>Carnivora</taxon>
        <taxon>Caniformia</taxon>
        <taxon>Canidae</taxon>
        <taxon>Canis</taxon>
    </lineage>
</organism>
<reference key="1">
    <citation type="journal article" date="2006" name="Mol. Biol. Cell">
        <title>The heat-shock protein Apg-2 binds to the tight junction protein ZO-1 and regulates transcriptional activity of ZONAB.</title>
        <authorList>
            <person name="Tsapara A."/>
            <person name="Matter K."/>
            <person name="Balda M.S."/>
        </authorList>
    </citation>
    <scope>NUCLEOTIDE SEQUENCE [MRNA]</scope>
    <scope>INTERACTION WITH TJP1</scope>
</reference>
<gene>
    <name type="primary">HSPA4</name>
    <name type="synonym">APG2</name>
    <name evidence="1" type="synonym">HSPH2</name>
</gene>
<name>HSP74_CANLF</name>
<proteinExistence type="evidence at protein level"/>
<evidence type="ECO:0000250" key="1">
    <source>
        <dbReference type="UniProtKB" id="P34932"/>
    </source>
</evidence>
<evidence type="ECO:0000250" key="2">
    <source>
        <dbReference type="UniProtKB" id="Q61316"/>
    </source>
</evidence>
<evidence type="ECO:0000256" key="3">
    <source>
        <dbReference type="SAM" id="MobiDB-lite"/>
    </source>
</evidence>
<evidence type="ECO:0000269" key="4">
    <source>
    </source>
</evidence>
<evidence type="ECO:0000305" key="5"/>
<sequence>MSVVGIDLGFQSCYVAVARAGGIETIANEYSDRCTPACISFGPKNRSIGAAAKSQVISNAKNTVQGFKRFHGRAFSDPFVEAEKSNLAYDIVQLPTGLTGIKVKYMEEERNFTTEQVTAMLLSKLKETAESVLKKPVVDCVVSVPCFYTDAERRSVMDATQIAGLNCLRLMNETTAVALAYGIYKQDLPALEEKPRNVVFVDMGHSSYQVSVCAFNRGKLKVLATAFDTTLGGRKFDEVLVNHFCEEFGKKYKLDIKSKIRALLRLSQECEKLKKLMSANASDLPLSIECFMNDVDVSGTMNRGKFLEMCDDLLARVEPPLRSVLEQAKLRKEDIYAVEIVGGATRIPAVKEKISKFFGKELSTTLNADEAVTRGCALQCAILSPAFKVREFSITDVVPYSISLRWNSPAEEGSSDCEVFTKNHSAPFSKVLTFYRKEPFTLEAYYSSPQDLPYPDPAIAQFLVQKVTPQSDGSSSKVKVKVRVNVHGIFSVSSASLVEVLKFEENEEPMETDQNAKEEEKMQVDQEEPHAEEQQQQTPAENKAESEEMETSQAASKDKKMDQPPQAKKAKVKTSTVDLPIENQLLWQIDREMLNLYIENEGKMIMQDKLKKERNDAKNAVEEYVYEMRDKLSGEYEKFVSEDDRNSFTLKLEDTENWLYEDGEDQPKQVYVDKLAELKNLGQPIKMRFQESEERPKLFEELGKQIQQYMKVISSFKNKEDQYDHLDAADMLKVEKSTNEAMEWMNNKLNLQNKQSLTVDPVVKAKEIEAKIKELMSVCGPIISKPKPKVEPPKEEQKNAEQNGPVDGQGDSPGPQAAEQGTDTAVPSDSDKKLPEMDID</sequence>
<dbReference type="EMBL" id="AY911512">
    <property type="protein sequence ID" value="AAX89038.1"/>
    <property type="molecule type" value="mRNA"/>
</dbReference>
<dbReference type="RefSeq" id="NP_001041481.1">
    <property type="nucleotide sequence ID" value="NM_001048016.1"/>
</dbReference>
<dbReference type="SMR" id="Q2TFN9"/>
<dbReference type="BioGRID" id="140407">
    <property type="interactions" value="1"/>
</dbReference>
<dbReference type="FunCoup" id="Q2TFN9">
    <property type="interactions" value="3297"/>
</dbReference>
<dbReference type="IntAct" id="Q2TFN9">
    <property type="interactions" value="1"/>
</dbReference>
<dbReference type="MINT" id="Q2TFN9"/>
<dbReference type="STRING" id="9615.ENSCAFP00000062263"/>
<dbReference type="PaxDb" id="9612-ENSCAFP00000001368"/>
<dbReference type="GeneID" id="474680"/>
<dbReference type="KEGG" id="cfa:474680"/>
<dbReference type="CTD" id="3308"/>
<dbReference type="eggNOG" id="KOG0103">
    <property type="taxonomic scope" value="Eukaryota"/>
</dbReference>
<dbReference type="InParanoid" id="Q2TFN9"/>
<dbReference type="OrthoDB" id="434160at2759"/>
<dbReference type="Proteomes" id="UP000002254">
    <property type="component" value="Unplaced"/>
</dbReference>
<dbReference type="Proteomes" id="UP000694429">
    <property type="component" value="Unplaced"/>
</dbReference>
<dbReference type="Proteomes" id="UP000694542">
    <property type="component" value="Unplaced"/>
</dbReference>
<dbReference type="Proteomes" id="UP000805418">
    <property type="component" value="Unplaced"/>
</dbReference>
<dbReference type="GO" id="GO:0005829">
    <property type="term" value="C:cytosol"/>
    <property type="evidence" value="ECO:0000318"/>
    <property type="project" value="GO_Central"/>
</dbReference>
<dbReference type="GO" id="GO:0005634">
    <property type="term" value="C:nucleus"/>
    <property type="evidence" value="ECO:0000318"/>
    <property type="project" value="GO_Central"/>
</dbReference>
<dbReference type="GO" id="GO:0000774">
    <property type="term" value="F:adenyl-nucleotide exchange factor activity"/>
    <property type="evidence" value="ECO:0000318"/>
    <property type="project" value="GO_Central"/>
</dbReference>
<dbReference type="GO" id="GO:0005524">
    <property type="term" value="F:ATP binding"/>
    <property type="evidence" value="ECO:0007669"/>
    <property type="project" value="UniProtKB-KW"/>
</dbReference>
<dbReference type="GO" id="GO:0140662">
    <property type="term" value="F:ATP-dependent protein folding chaperone"/>
    <property type="evidence" value="ECO:0007669"/>
    <property type="project" value="InterPro"/>
</dbReference>
<dbReference type="GO" id="GO:0006457">
    <property type="term" value="P:protein folding"/>
    <property type="evidence" value="ECO:0000318"/>
    <property type="project" value="GO_Central"/>
</dbReference>
<dbReference type="CDD" id="cd11737">
    <property type="entry name" value="ASKHA_NBD_HSP70_HSPA4"/>
    <property type="match status" value="1"/>
</dbReference>
<dbReference type="FunFam" id="1.20.1270.10:FF:000002">
    <property type="entry name" value="Heat shock 70 kDa protein 4"/>
    <property type="match status" value="1"/>
</dbReference>
<dbReference type="FunFam" id="3.30.30.30:FF:000002">
    <property type="entry name" value="Heat shock 70 kDa protein 4"/>
    <property type="match status" value="1"/>
</dbReference>
<dbReference type="FunFam" id="3.30.420.40:FF:000171">
    <property type="entry name" value="Heat shock 70 kDa protein 4"/>
    <property type="match status" value="2"/>
</dbReference>
<dbReference type="FunFam" id="3.90.640.10:FF:000004">
    <property type="entry name" value="Heat shock 70 kDa protein 4"/>
    <property type="match status" value="1"/>
</dbReference>
<dbReference type="FunFam" id="1.20.1270.10:FF:000018">
    <property type="entry name" value="heat shock 70 kDa protein 4 isoform X1"/>
    <property type="match status" value="1"/>
</dbReference>
<dbReference type="FunFam" id="2.60.34.10:FF:000010">
    <property type="entry name" value="heat shock 70 kDa protein 4 isoform X1"/>
    <property type="match status" value="1"/>
</dbReference>
<dbReference type="FunFam" id="3.30.420.40:FF:000767">
    <property type="entry name" value="Heat shock protein 70 (HSP70)-4, putative"/>
    <property type="match status" value="2"/>
</dbReference>
<dbReference type="Gene3D" id="1.20.1270.10">
    <property type="match status" value="2"/>
</dbReference>
<dbReference type="Gene3D" id="3.30.30.30">
    <property type="match status" value="1"/>
</dbReference>
<dbReference type="Gene3D" id="3.30.420.40">
    <property type="match status" value="2"/>
</dbReference>
<dbReference type="Gene3D" id="3.90.640.10">
    <property type="entry name" value="Actin, Chain A, domain 4"/>
    <property type="match status" value="1"/>
</dbReference>
<dbReference type="Gene3D" id="2.60.34.10">
    <property type="entry name" value="Substrate Binding Domain Of DNAk, Chain A, domain 1"/>
    <property type="match status" value="1"/>
</dbReference>
<dbReference type="InterPro" id="IPR043129">
    <property type="entry name" value="ATPase_NBD"/>
</dbReference>
<dbReference type="InterPro" id="IPR018181">
    <property type="entry name" value="Heat_shock_70_CS"/>
</dbReference>
<dbReference type="InterPro" id="IPR029048">
    <property type="entry name" value="HSP70_C_sf"/>
</dbReference>
<dbReference type="InterPro" id="IPR029047">
    <property type="entry name" value="HSP70_peptide-bd_sf"/>
</dbReference>
<dbReference type="InterPro" id="IPR013126">
    <property type="entry name" value="Hsp_70_fam"/>
</dbReference>
<dbReference type="InterPro" id="IPR042052">
    <property type="entry name" value="HSPA4_NBD"/>
</dbReference>
<dbReference type="PANTHER" id="PTHR45639:SF6">
    <property type="entry name" value="HEAT SHOCK 70 KDA PROTEIN 4"/>
    <property type="match status" value="1"/>
</dbReference>
<dbReference type="PANTHER" id="PTHR45639">
    <property type="entry name" value="HSC70CB, ISOFORM G-RELATED"/>
    <property type="match status" value="1"/>
</dbReference>
<dbReference type="Pfam" id="PF00012">
    <property type="entry name" value="HSP70"/>
    <property type="match status" value="1"/>
</dbReference>
<dbReference type="PRINTS" id="PR00301">
    <property type="entry name" value="HEATSHOCK70"/>
</dbReference>
<dbReference type="SUPFAM" id="SSF53067">
    <property type="entry name" value="Actin-like ATPase domain"/>
    <property type="match status" value="2"/>
</dbReference>
<dbReference type="SUPFAM" id="SSF100934">
    <property type="entry name" value="Heat shock protein 70kD (HSP70), C-terminal subdomain"/>
    <property type="match status" value="2"/>
</dbReference>
<dbReference type="SUPFAM" id="SSF100920">
    <property type="entry name" value="Heat shock protein 70kD (HSP70), peptide-binding domain"/>
    <property type="match status" value="1"/>
</dbReference>
<dbReference type="PROSITE" id="PS00329">
    <property type="entry name" value="HSP70_2"/>
    <property type="match status" value="1"/>
</dbReference>
<dbReference type="PROSITE" id="PS01036">
    <property type="entry name" value="HSP70_3"/>
    <property type="match status" value="1"/>
</dbReference>
<keyword id="KW-0007">Acetylation</keyword>
<keyword id="KW-0067">ATP-binding</keyword>
<keyword id="KW-0963">Cytoplasm</keyword>
<keyword id="KW-0488">Methylation</keyword>
<keyword id="KW-0547">Nucleotide-binding</keyword>
<keyword id="KW-0597">Phosphoprotein</keyword>
<keyword id="KW-1185">Reference proteome</keyword>
<keyword id="KW-0346">Stress response</keyword>
<comment type="subunit">
    <text evidence="4">Interacts with TJP1/ZO-1.</text>
</comment>
<comment type="interaction">
    <interactant intactId="EBI-8002398">
        <id>Q2TFN9</id>
    </interactant>
    <interactant intactId="EBI-6988333">
        <id>O97758</id>
        <label>TJP1</label>
    </interactant>
    <organismsDiffer>false</organismsDiffer>
    <experiments>3</experiments>
</comment>
<comment type="subcellular location">
    <subcellularLocation>
        <location evidence="5">Cytoplasm</location>
    </subcellularLocation>
</comment>
<comment type="similarity">
    <text evidence="5">Belongs to the heat shock protein 70 family.</text>
</comment>
<feature type="chain" id="PRO_0000289942" description="Heat shock 70 kDa protein 4">
    <location>
        <begin position="1"/>
        <end position="840"/>
    </location>
</feature>
<feature type="region of interest" description="Disordered" evidence="3">
    <location>
        <begin position="506"/>
        <end position="575"/>
    </location>
</feature>
<feature type="region of interest" description="Disordered" evidence="3">
    <location>
        <begin position="782"/>
        <end position="840"/>
    </location>
</feature>
<feature type="compositionally biased region" description="Basic and acidic residues" evidence="3">
    <location>
        <begin position="514"/>
        <end position="533"/>
    </location>
</feature>
<feature type="compositionally biased region" description="Basic and acidic residues" evidence="3">
    <location>
        <begin position="788"/>
        <end position="799"/>
    </location>
</feature>
<feature type="compositionally biased region" description="Basic and acidic residues" evidence="3">
    <location>
        <begin position="829"/>
        <end position="840"/>
    </location>
</feature>
<feature type="modified residue" description="N6-acetyllysine" evidence="2">
    <location>
        <position position="53"/>
    </location>
</feature>
<feature type="modified residue" description="Phosphoserine" evidence="1">
    <location>
        <position position="76"/>
    </location>
</feature>
<feature type="modified residue" description="Phosphotyrosine" evidence="1">
    <location>
        <position position="89"/>
    </location>
</feature>
<feature type="modified residue" description="Phosphotyrosine" evidence="1">
    <location>
        <position position="336"/>
    </location>
</feature>
<feature type="modified residue" description="Phosphoserine" evidence="1">
    <location>
        <position position="393"/>
    </location>
</feature>
<feature type="modified residue" description="Phosphoserine" evidence="2">
    <location>
        <position position="415"/>
    </location>
</feature>
<feature type="modified residue" description="N6-acetyllysine" evidence="1">
    <location>
        <position position="430"/>
    </location>
</feature>
<feature type="modified residue" description="Phosphothreonine" evidence="1">
    <location>
        <position position="538"/>
    </location>
</feature>
<feature type="modified residue" description="Phosphoserine" evidence="1">
    <location>
        <position position="546"/>
    </location>
</feature>
<feature type="modified residue" description="Phosphoserine" evidence="1">
    <location>
        <position position="647"/>
    </location>
</feature>
<feature type="modified residue" description="Phosphotyrosine" evidence="2">
    <location>
        <position position="660"/>
    </location>
</feature>
<feature type="modified residue" description="N6-acetyllysine" evidence="1">
    <location>
        <position position="679"/>
    </location>
</feature>
<feature type="modified residue" description="Phosphoserine" evidence="1">
    <location>
        <position position="756"/>
    </location>
</feature>
<feature type="modified residue" description="N6-methyllysine" evidence="1">
    <location>
        <position position="773"/>
    </location>
</feature>
<protein>
    <recommendedName>
        <fullName>Heat shock 70 kDa protein 4</fullName>
    </recommendedName>
    <alternativeName>
        <fullName>Heat shock 70-related protein APG-2</fullName>
    </alternativeName>
</protein>